<reference key="1">
    <citation type="journal article" date="2014" name="PLoS Genet.">
        <title>Analysis of the genome and transcriptome of Cryptococcus neoformans var. grubii reveals complex RNA expression and microevolution leading to virulence attenuation.</title>
        <authorList>
            <person name="Janbon G."/>
            <person name="Ormerod K.L."/>
            <person name="Paulet D."/>
            <person name="Byrnes E.J. III"/>
            <person name="Yadav V."/>
            <person name="Chatterjee G."/>
            <person name="Mullapudi N."/>
            <person name="Hon C.-C."/>
            <person name="Billmyre R.B."/>
            <person name="Brunel F."/>
            <person name="Bahn Y.-S."/>
            <person name="Chen W."/>
            <person name="Chen Y."/>
            <person name="Chow E.W.L."/>
            <person name="Coppee J.-Y."/>
            <person name="Floyd-Averette A."/>
            <person name="Gaillardin C."/>
            <person name="Gerik K.J."/>
            <person name="Goldberg J."/>
            <person name="Gonzalez-Hilarion S."/>
            <person name="Gujja S."/>
            <person name="Hamlin J.L."/>
            <person name="Hsueh Y.-P."/>
            <person name="Ianiri G."/>
            <person name="Jones S."/>
            <person name="Kodira C.D."/>
            <person name="Kozubowski L."/>
            <person name="Lam W."/>
            <person name="Marra M."/>
            <person name="Mesner L.D."/>
            <person name="Mieczkowski P.A."/>
            <person name="Moyrand F."/>
            <person name="Nielsen K."/>
            <person name="Proux C."/>
            <person name="Rossignol T."/>
            <person name="Schein J.E."/>
            <person name="Sun S."/>
            <person name="Wollschlaeger C."/>
            <person name="Wood I.A."/>
            <person name="Zeng Q."/>
            <person name="Neuveglise C."/>
            <person name="Newlon C.S."/>
            <person name="Perfect J.R."/>
            <person name="Lodge J.K."/>
            <person name="Idnurm A."/>
            <person name="Stajich J.E."/>
            <person name="Kronstad J.W."/>
            <person name="Sanyal K."/>
            <person name="Heitman J."/>
            <person name="Fraser J.A."/>
            <person name="Cuomo C.A."/>
            <person name="Dietrich F.S."/>
        </authorList>
    </citation>
    <scope>NUCLEOTIDE SEQUENCE [LARGE SCALE GENOMIC DNA]</scope>
    <source>
        <strain>H99 / ATCC 208821 / CBS 10515 / FGSC 9487</strain>
    </source>
</reference>
<reference key="2">
    <citation type="journal article" date="2005" name="Eukaryot. Cell">
        <title>A chitin synthase and its regulator protein are critical for chitosan production and growth of the fungal pathogen Cryptococcus neoformans.</title>
        <authorList>
            <person name="Banks I.R."/>
            <person name="Specht C.A."/>
            <person name="Donlin M.J."/>
            <person name="Gerik K.J."/>
            <person name="Levitz S.M."/>
            <person name="Lodge J.K."/>
        </authorList>
    </citation>
    <scope>FUNCTION</scope>
</reference>
<reference evidence="8" key="3">
    <citation type="journal article" date="2018" name="Cell Surf.">
        <title>Lack of chitin synthase genes impacts capsular architecture and cellular physiology in Cryptococcus neoformans.</title>
        <authorList>
            <person name="Rodrigues J."/>
            <person name="Ramos C.L."/>
            <person name="Frases S."/>
            <person name="Godinho R.M.D.C."/>
            <person name="Fonseca F.L."/>
            <person name="Rodrigues M.L."/>
        </authorList>
    </citation>
    <scope>DISRUPTION PHENOTYPE</scope>
</reference>
<reference evidence="8" key="4">
    <citation type="journal article" date="2019" name="Genetics">
        <title>Roles for Stress Response and Cell Wall Biosynthesis Pathways in Caspofungin Tolerance in Cryptococcus neoformans.</title>
        <authorList>
            <person name="Pianalto K.M."/>
            <person name="Billmyre R.B."/>
            <person name="Telzrow C.L."/>
            <person name="Alspaugh J.A."/>
        </authorList>
    </citation>
    <scope>INDUCTION</scope>
</reference>
<sequence length="942" mass="105826">MAYHYSHDSDRRQPHGGYNYPSNYSNPSQYSIPDSVYSGHSTNTPRVPSPGGYHQQPSPTTRAVNPAYYQPQPTASSMTSHDLMYGRPSPGPNQYGAAPADVVRGPGATTVPLSQQAPYQPYPSHTDYSDEDKSFASTTHLVSPQKEWGVGSVVPVTTIPPVNQLPYQPYQAYPPRPSPSPITHRGGTSHWHAMRKQLLERRVIKQIPLHNGNLVMDVPVPKGVIPSTKGLGVMDGEMDSMRYSAATCDPDDFMGSKFSLRQYLYGRKTELFIVMTMYNENSELLLRTLNAVIKNIAHLTTRTRSKTWGPDSWKKVVVCIVADGRKVVDPRVLKVLQLMGVYAEGVMKDHVVDKETQAHIFEYTSQVVVSETGEVGFGSTPIQLLFCLKEQNKKKLNSHRWFFNAFGPLIKPNVCVLLDVGTKPSGHSIYELYKCFEKHPTVGGACGEIFADTGKWGKYLWNPLVAGQNFEYKMSNILDKPFESVFGLISVLPGAFSAYRYDAVANHADGTGPLAAYFRGELMNQPGATATIFDRNKFLAEDRILAFEIVVKKNARWRLQYVKAAKAGTDVPATVPEFISQRRRWLNGSIFAATYAMVCFWRIWTSGHGIFRKFTLTFLTIYNLFNLLFNWLSVSSFYLAFFFLISSSISGSSDPFNGAGDEIFQVFNKVYIALIFVVLVCSLGNRPQGSNYMYTFCIFMFAVCQGILLYCAGWTVYQTVPHTSEGWEDVSGLFENRTFVQLALSLMATYGLYLISSLLYFEPWHMLTSFVQYLLLLPSYVNILLIYAMCNLHDVSWGTKGDNGSSKDLGAAKKVEKDGKEMAEVALPTKQEDVEALWQQARQELRVPVKEKAEKRSPETKRADEDRNFRTNVVLLFLGSNMLIILLFTSSTFTNWVNSHFVDATSSTFNPYLTVIFYAVLGLSALRFAGCLLYLIFRMFGY</sequence>
<proteinExistence type="evidence at transcript level"/>
<gene>
    <name evidence="7" type="primary">CHS2</name>
    <name type="ORF">CNAG_03326</name>
</gene>
<dbReference type="EC" id="2.4.1.16" evidence="9"/>
<dbReference type="EMBL" id="CP003827">
    <property type="protein sequence ID" value="AFR96547.2"/>
    <property type="molecule type" value="Genomic_DNA"/>
</dbReference>
<dbReference type="RefSeq" id="XP_012050916.1">
    <property type="nucleotide sequence ID" value="XM_012195526.1"/>
</dbReference>
<dbReference type="SMR" id="J9VQ06"/>
<dbReference type="GlyCosmos" id="J9VQ06">
    <property type="glycosylation" value="4 sites, No reported glycans"/>
</dbReference>
<dbReference type="GeneID" id="23886838"/>
<dbReference type="KEGG" id="cng:CNAG_03326"/>
<dbReference type="VEuPathDB" id="FungiDB:CNAG_03326"/>
<dbReference type="HOGENOM" id="CLU_004760_3_0_1"/>
<dbReference type="OrthoDB" id="2814at5206"/>
<dbReference type="Proteomes" id="UP000010091">
    <property type="component" value="Chromosome 8"/>
</dbReference>
<dbReference type="GO" id="GO:0030428">
    <property type="term" value="C:cell septum"/>
    <property type="evidence" value="ECO:0007669"/>
    <property type="project" value="TreeGrafter"/>
</dbReference>
<dbReference type="GO" id="GO:0005886">
    <property type="term" value="C:plasma membrane"/>
    <property type="evidence" value="ECO:0007669"/>
    <property type="project" value="UniProtKB-SubCell"/>
</dbReference>
<dbReference type="GO" id="GO:0004100">
    <property type="term" value="F:chitin synthase activity"/>
    <property type="evidence" value="ECO:0000250"/>
    <property type="project" value="UniProtKB"/>
</dbReference>
<dbReference type="GO" id="GO:0071555">
    <property type="term" value="P:cell wall organization"/>
    <property type="evidence" value="ECO:0007669"/>
    <property type="project" value="UniProtKB-KW"/>
</dbReference>
<dbReference type="GO" id="GO:0006031">
    <property type="term" value="P:chitin biosynthetic process"/>
    <property type="evidence" value="ECO:0000250"/>
    <property type="project" value="UniProtKB"/>
</dbReference>
<dbReference type="CDD" id="cd04190">
    <property type="entry name" value="Chitin_synth_C"/>
    <property type="match status" value="1"/>
</dbReference>
<dbReference type="InterPro" id="IPR004835">
    <property type="entry name" value="Chitin_synth"/>
</dbReference>
<dbReference type="InterPro" id="IPR004834">
    <property type="entry name" value="Chitin_synth_fun"/>
</dbReference>
<dbReference type="InterPro" id="IPR013616">
    <property type="entry name" value="Chitin_synth_N"/>
</dbReference>
<dbReference type="InterPro" id="IPR029044">
    <property type="entry name" value="Nucleotide-diphossugar_trans"/>
</dbReference>
<dbReference type="PANTHER" id="PTHR22914">
    <property type="entry name" value="CHITIN SYNTHASE"/>
    <property type="match status" value="1"/>
</dbReference>
<dbReference type="PANTHER" id="PTHR22914:SF44">
    <property type="entry name" value="CHITIN SYNTHASE 2"/>
    <property type="match status" value="1"/>
</dbReference>
<dbReference type="Pfam" id="PF01644">
    <property type="entry name" value="Chitin_synth_1"/>
    <property type="match status" value="1"/>
</dbReference>
<dbReference type="Pfam" id="PF08407">
    <property type="entry name" value="Chitin_synth_1N"/>
    <property type="match status" value="1"/>
</dbReference>
<dbReference type="SUPFAM" id="SSF53448">
    <property type="entry name" value="Nucleotide-diphospho-sugar transferases"/>
    <property type="match status" value="1"/>
</dbReference>
<organism>
    <name type="scientific">Cryptococcus neoformans var. grubii serotype A (strain H99 / ATCC 208821 / CBS 10515 / FGSC 9487)</name>
    <name type="common">Filobasidiella neoformans var. grubii</name>
    <dbReference type="NCBI Taxonomy" id="235443"/>
    <lineage>
        <taxon>Eukaryota</taxon>
        <taxon>Fungi</taxon>
        <taxon>Dikarya</taxon>
        <taxon>Basidiomycota</taxon>
        <taxon>Agaricomycotina</taxon>
        <taxon>Tremellomycetes</taxon>
        <taxon>Tremellales</taxon>
        <taxon>Cryptococcaceae</taxon>
        <taxon>Cryptococcus</taxon>
        <taxon>Cryptococcus neoformans species complex</taxon>
    </lineage>
</organism>
<feature type="chain" id="PRO_0000451812" description="Chitin synthase 2">
    <location>
        <begin position="1"/>
        <end position="942"/>
    </location>
</feature>
<feature type="transmembrane region" description="Helical" evidence="1">
    <location>
        <begin position="590"/>
        <end position="610"/>
    </location>
</feature>
<feature type="transmembrane region" description="Helical" evidence="1">
    <location>
        <begin position="625"/>
        <end position="645"/>
    </location>
</feature>
<feature type="transmembrane region" description="Helical" evidence="1">
    <location>
        <begin position="663"/>
        <end position="683"/>
    </location>
</feature>
<feature type="transmembrane region" description="Helical" evidence="1">
    <location>
        <begin position="696"/>
        <end position="716"/>
    </location>
</feature>
<feature type="transmembrane region" description="Helical" evidence="1">
    <location>
        <begin position="739"/>
        <end position="759"/>
    </location>
</feature>
<feature type="transmembrane region" description="Helical" evidence="1">
    <location>
        <begin position="770"/>
        <end position="790"/>
    </location>
</feature>
<feature type="transmembrane region" description="Helical" evidence="1">
    <location>
        <begin position="873"/>
        <end position="893"/>
    </location>
</feature>
<feature type="transmembrane region" description="Helical" evidence="1">
    <location>
        <begin position="916"/>
        <end position="936"/>
    </location>
</feature>
<feature type="region of interest" description="Disordered" evidence="4">
    <location>
        <begin position="1"/>
        <end position="132"/>
    </location>
</feature>
<feature type="compositionally biased region" description="Basic and acidic residues" evidence="4">
    <location>
        <begin position="1"/>
        <end position="13"/>
    </location>
</feature>
<feature type="compositionally biased region" description="Low complexity" evidence="4">
    <location>
        <begin position="18"/>
        <end position="33"/>
    </location>
</feature>
<feature type="compositionally biased region" description="Polar residues" evidence="4">
    <location>
        <begin position="71"/>
        <end position="80"/>
    </location>
</feature>
<feature type="glycosylation site" description="N-linked (GlcNAc...) asparagine" evidence="2">
    <location>
        <position position="23"/>
    </location>
</feature>
<feature type="glycosylation site" description="N-linked (GlcNAc...) asparagine" evidence="2">
    <location>
        <position position="587"/>
    </location>
</feature>
<feature type="glycosylation site" description="N-linked (GlcNAc...) asparagine" evidence="2">
    <location>
        <position position="736"/>
    </location>
</feature>
<feature type="glycosylation site" description="N-linked (GlcNAc...) asparagine" evidence="2">
    <location>
        <position position="803"/>
    </location>
</feature>
<accession>J9VQ06</accession>
<comment type="function">
    <text evidence="9">Polymerizes chitin, a structural polymer of the cell wall and septum, by transferring the sugar moiety of UDP-GlcNAc to the non-reducing end of the growing chitin polymer.</text>
</comment>
<comment type="catalytic activity">
    <reaction evidence="3">
        <text>[(1-&gt;4)-N-acetyl-beta-D-glucosaminyl](n) + UDP-N-acetyl-alpha-D-glucosamine = [(1-&gt;4)-N-acetyl-beta-D-glucosaminyl](n+1) + UDP + H(+)</text>
        <dbReference type="Rhea" id="RHEA:16637"/>
        <dbReference type="Rhea" id="RHEA-COMP:9593"/>
        <dbReference type="Rhea" id="RHEA-COMP:9595"/>
        <dbReference type="ChEBI" id="CHEBI:15378"/>
        <dbReference type="ChEBI" id="CHEBI:17029"/>
        <dbReference type="ChEBI" id="CHEBI:57705"/>
        <dbReference type="ChEBI" id="CHEBI:58223"/>
        <dbReference type="EC" id="2.4.1.16"/>
    </reaction>
</comment>
<comment type="subcellular location">
    <subcellularLocation>
        <location evidence="8">Cell membrane</location>
        <topology evidence="3">Multi-pass membrane protein</topology>
    </subcellularLocation>
</comment>
<comment type="induction">
    <text evidence="5">Induced by the antifungal agent caspofungin.</text>
</comment>
<comment type="disruption phenotype">
    <text evidence="6">Abnormal capsular morphology: abnormal fiber distribution, decreases capsular diameter (PubMed:32743128). Decreases extracellular vesicle secretion (PubMed:32743128).</text>
</comment>
<comment type="similarity">
    <text evidence="8">Belongs to the chitin synthase family. Class III subfamily.</text>
</comment>
<name>CHS2_CRYNH</name>
<protein>
    <recommendedName>
        <fullName evidence="7">Chitin synthase 2</fullName>
        <ecNumber evidence="9">2.4.1.16</ecNumber>
    </recommendedName>
    <alternativeName>
        <fullName evidence="8">Chitin-UDP acetyl-glucosaminyl transferase 2</fullName>
    </alternativeName>
    <alternativeName>
        <fullName evidence="7">Class-III chitin synthase 2</fullName>
    </alternativeName>
</protein>
<evidence type="ECO:0000255" key="1"/>
<evidence type="ECO:0000255" key="2">
    <source>
        <dbReference type="PROSITE-ProRule" id="PRU00498"/>
    </source>
</evidence>
<evidence type="ECO:0000255" key="3">
    <source>
        <dbReference type="RuleBase" id="RU366040"/>
    </source>
</evidence>
<evidence type="ECO:0000256" key="4">
    <source>
        <dbReference type="SAM" id="MobiDB-lite"/>
    </source>
</evidence>
<evidence type="ECO:0000269" key="5">
    <source>
    </source>
</evidence>
<evidence type="ECO:0000269" key="6">
    <source>
    </source>
</evidence>
<evidence type="ECO:0000303" key="7">
    <source>
    </source>
</evidence>
<evidence type="ECO:0000305" key="8"/>
<evidence type="ECO:0000305" key="9">
    <source>
    </source>
</evidence>
<keyword id="KW-1003">Cell membrane</keyword>
<keyword id="KW-0961">Cell wall biogenesis/degradation</keyword>
<keyword id="KW-0325">Glycoprotein</keyword>
<keyword id="KW-0328">Glycosyltransferase</keyword>
<keyword id="KW-0472">Membrane</keyword>
<keyword id="KW-0808">Transferase</keyword>
<keyword id="KW-0812">Transmembrane</keyword>
<keyword id="KW-1133">Transmembrane helix</keyword>